<evidence type="ECO:0000255" key="1">
    <source>
        <dbReference type="HAMAP-Rule" id="MF_00818"/>
    </source>
</evidence>
<reference key="1">
    <citation type="journal article" date="2007" name="Proc. Natl. Acad. Sci. U.S.A.">
        <title>Deep-sea vent epsilon-proteobacterial genomes provide insights into emergence of pathogens.</title>
        <authorList>
            <person name="Nakagawa S."/>
            <person name="Takaki Y."/>
            <person name="Shimamura S."/>
            <person name="Reysenbach A.-L."/>
            <person name="Takai K."/>
            <person name="Horikoshi K."/>
        </authorList>
    </citation>
    <scope>NUCLEOTIDE SEQUENCE [LARGE SCALE GENOMIC DNA]</scope>
    <source>
        <strain>SB155-2</strain>
    </source>
</reference>
<gene>
    <name evidence="1" type="primary">queF</name>
    <name type="ordered locus">NIS_0005</name>
</gene>
<feature type="chain" id="PRO_1000062398" description="NADPH-dependent 7-cyano-7-deazaguanine reductase">
    <location>
        <begin position="1"/>
        <end position="131"/>
    </location>
</feature>
<feature type="active site" description="Thioimide intermediate" evidence="1">
    <location>
        <position position="41"/>
    </location>
</feature>
<feature type="active site" description="Proton donor" evidence="1">
    <location>
        <position position="48"/>
    </location>
</feature>
<feature type="binding site" evidence="1">
    <location>
        <begin position="63"/>
        <end position="65"/>
    </location>
    <ligand>
        <name>substrate</name>
    </ligand>
</feature>
<feature type="binding site" evidence="1">
    <location>
        <begin position="82"/>
        <end position="83"/>
    </location>
    <ligand>
        <name>substrate</name>
    </ligand>
</feature>
<sequence>MRYGEKEIQEFDPKKDLEIWPNKHNKPYKIKITLPEFSCLCPRSGYPDYATMHLEYIPDQYVVELKALKLYINSFRNRYISHEDSTNEIFDTLYSKLKPKYMRLVADFNPRGNVHTLIEIDSEEIEKVSNG</sequence>
<accession>A6Q0W4</accession>
<keyword id="KW-0963">Cytoplasm</keyword>
<keyword id="KW-0521">NADP</keyword>
<keyword id="KW-0560">Oxidoreductase</keyword>
<keyword id="KW-0671">Queuosine biosynthesis</keyword>
<keyword id="KW-1185">Reference proteome</keyword>
<comment type="function">
    <text evidence="1">Catalyzes the NADPH-dependent reduction of 7-cyano-7-deazaguanine (preQ0) to 7-aminomethyl-7-deazaguanine (preQ1).</text>
</comment>
<comment type="catalytic activity">
    <reaction evidence="1">
        <text>7-aminomethyl-7-carbaguanine + 2 NADP(+) = 7-cyano-7-deazaguanine + 2 NADPH + 3 H(+)</text>
        <dbReference type="Rhea" id="RHEA:13409"/>
        <dbReference type="ChEBI" id="CHEBI:15378"/>
        <dbReference type="ChEBI" id="CHEBI:45075"/>
        <dbReference type="ChEBI" id="CHEBI:57783"/>
        <dbReference type="ChEBI" id="CHEBI:58349"/>
        <dbReference type="ChEBI" id="CHEBI:58703"/>
        <dbReference type="EC" id="1.7.1.13"/>
    </reaction>
</comment>
<comment type="pathway">
    <text evidence="1">tRNA modification; tRNA-queuosine biosynthesis.</text>
</comment>
<comment type="subcellular location">
    <subcellularLocation>
        <location evidence="1">Cytoplasm</location>
    </subcellularLocation>
</comment>
<comment type="similarity">
    <text evidence="1">Belongs to the GTP cyclohydrolase I family. QueF type 1 subfamily.</text>
</comment>
<name>QUEF_NITSB</name>
<dbReference type="EC" id="1.7.1.13" evidence="1"/>
<dbReference type="EMBL" id="AP009178">
    <property type="protein sequence ID" value="BAF69123.1"/>
    <property type="molecule type" value="Genomic_DNA"/>
</dbReference>
<dbReference type="RefSeq" id="WP_011979549.1">
    <property type="nucleotide sequence ID" value="NC_009662.1"/>
</dbReference>
<dbReference type="SMR" id="A6Q0W4"/>
<dbReference type="STRING" id="387092.NIS_0005"/>
<dbReference type="KEGG" id="nis:NIS_0005"/>
<dbReference type="eggNOG" id="COG0780">
    <property type="taxonomic scope" value="Bacteria"/>
</dbReference>
<dbReference type="HOGENOM" id="CLU_102489_1_1_7"/>
<dbReference type="InParanoid" id="A6Q0W4"/>
<dbReference type="OrthoDB" id="9789995at2"/>
<dbReference type="UniPathway" id="UPA00392"/>
<dbReference type="Proteomes" id="UP000001118">
    <property type="component" value="Chromosome"/>
</dbReference>
<dbReference type="GO" id="GO:0005737">
    <property type="term" value="C:cytoplasm"/>
    <property type="evidence" value="ECO:0007669"/>
    <property type="project" value="UniProtKB-SubCell"/>
</dbReference>
<dbReference type="GO" id="GO:0033739">
    <property type="term" value="F:preQ1 synthase activity"/>
    <property type="evidence" value="ECO:0007669"/>
    <property type="project" value="UniProtKB-UniRule"/>
</dbReference>
<dbReference type="GO" id="GO:0008616">
    <property type="term" value="P:queuosine biosynthetic process"/>
    <property type="evidence" value="ECO:0007669"/>
    <property type="project" value="UniProtKB-UniRule"/>
</dbReference>
<dbReference type="GO" id="GO:0006400">
    <property type="term" value="P:tRNA modification"/>
    <property type="evidence" value="ECO:0007669"/>
    <property type="project" value="UniProtKB-UniRule"/>
</dbReference>
<dbReference type="Gene3D" id="3.30.1130.10">
    <property type="match status" value="1"/>
</dbReference>
<dbReference type="HAMAP" id="MF_00818">
    <property type="entry name" value="QueF_type1"/>
    <property type="match status" value="1"/>
</dbReference>
<dbReference type="InterPro" id="IPR043133">
    <property type="entry name" value="GTP-CH-I_C/QueF"/>
</dbReference>
<dbReference type="InterPro" id="IPR050084">
    <property type="entry name" value="NADPH_dep_7-cyano-7-deazaG_red"/>
</dbReference>
<dbReference type="InterPro" id="IPR029500">
    <property type="entry name" value="QueF"/>
</dbReference>
<dbReference type="InterPro" id="IPR016856">
    <property type="entry name" value="QueF_type1"/>
</dbReference>
<dbReference type="NCBIfam" id="TIGR03139">
    <property type="entry name" value="QueF-II"/>
    <property type="match status" value="1"/>
</dbReference>
<dbReference type="PANTHER" id="PTHR34354">
    <property type="entry name" value="NADPH-DEPENDENT 7-CYANO-7-DEAZAGUANINE REDUCTASE"/>
    <property type="match status" value="1"/>
</dbReference>
<dbReference type="PANTHER" id="PTHR34354:SF1">
    <property type="entry name" value="NADPH-DEPENDENT 7-CYANO-7-DEAZAGUANINE REDUCTASE"/>
    <property type="match status" value="1"/>
</dbReference>
<dbReference type="Pfam" id="PF14489">
    <property type="entry name" value="QueF"/>
    <property type="match status" value="1"/>
</dbReference>
<dbReference type="PIRSF" id="PIRSF027377">
    <property type="entry name" value="Nitrile_oxidored_QueF"/>
    <property type="match status" value="1"/>
</dbReference>
<dbReference type="SUPFAM" id="SSF55620">
    <property type="entry name" value="Tetrahydrobiopterin biosynthesis enzymes-like"/>
    <property type="match status" value="1"/>
</dbReference>
<organism>
    <name type="scientific">Nitratiruptor sp. (strain SB155-2)</name>
    <dbReference type="NCBI Taxonomy" id="387092"/>
    <lineage>
        <taxon>Bacteria</taxon>
        <taxon>Pseudomonadati</taxon>
        <taxon>Campylobacterota</taxon>
        <taxon>Epsilonproteobacteria</taxon>
        <taxon>Nautiliales</taxon>
        <taxon>Nitratiruptoraceae</taxon>
        <taxon>Nitratiruptor</taxon>
    </lineage>
</organism>
<protein>
    <recommendedName>
        <fullName evidence="1">NADPH-dependent 7-cyano-7-deazaguanine reductase</fullName>
        <ecNumber evidence="1">1.7.1.13</ecNumber>
    </recommendedName>
    <alternativeName>
        <fullName evidence="1">7-cyano-7-carbaguanine reductase</fullName>
    </alternativeName>
    <alternativeName>
        <fullName evidence="1">NADPH-dependent nitrile oxidoreductase</fullName>
    </alternativeName>
    <alternativeName>
        <fullName evidence="1">PreQ(0) reductase</fullName>
    </alternativeName>
</protein>
<proteinExistence type="inferred from homology"/>